<keyword id="KW-0028">Amino-acid biosynthesis</keyword>
<keyword id="KW-0055">Arginine biosynthesis</keyword>
<keyword id="KW-0963">Cytoplasm</keyword>
<keyword id="KW-0456">Lyase</keyword>
<organism>
    <name type="scientific">Yersinia pseudotuberculosis serotype I (strain IP32953)</name>
    <dbReference type="NCBI Taxonomy" id="273123"/>
    <lineage>
        <taxon>Bacteria</taxon>
        <taxon>Pseudomonadati</taxon>
        <taxon>Pseudomonadota</taxon>
        <taxon>Gammaproteobacteria</taxon>
        <taxon>Enterobacterales</taxon>
        <taxon>Yersiniaceae</taxon>
        <taxon>Yersinia</taxon>
    </lineage>
</organism>
<protein>
    <recommendedName>
        <fullName evidence="1">Argininosuccinate lyase</fullName>
        <shortName evidence="1">ASAL</shortName>
        <ecNumber evidence="1">4.3.2.1</ecNumber>
    </recommendedName>
    <alternativeName>
        <fullName evidence="1">Arginosuccinase</fullName>
    </alternativeName>
</protein>
<evidence type="ECO:0000255" key="1">
    <source>
        <dbReference type="HAMAP-Rule" id="MF_00006"/>
    </source>
</evidence>
<reference key="1">
    <citation type="journal article" date="2004" name="Proc. Natl. Acad. Sci. U.S.A.">
        <title>Insights into the evolution of Yersinia pestis through whole-genome comparison with Yersinia pseudotuberculosis.</title>
        <authorList>
            <person name="Chain P.S.G."/>
            <person name="Carniel E."/>
            <person name="Larimer F.W."/>
            <person name="Lamerdin J."/>
            <person name="Stoutland P.O."/>
            <person name="Regala W.M."/>
            <person name="Georgescu A.M."/>
            <person name="Vergez L.M."/>
            <person name="Land M.L."/>
            <person name="Motin V.L."/>
            <person name="Brubaker R.R."/>
            <person name="Fowler J."/>
            <person name="Hinnebusch J."/>
            <person name="Marceau M."/>
            <person name="Medigue C."/>
            <person name="Simonet M."/>
            <person name="Chenal-Francisque V."/>
            <person name="Souza B."/>
            <person name="Dacheux D."/>
            <person name="Elliott J.M."/>
            <person name="Derbise A."/>
            <person name="Hauser L.J."/>
            <person name="Garcia E."/>
        </authorList>
    </citation>
    <scope>NUCLEOTIDE SEQUENCE [LARGE SCALE GENOMIC DNA]</scope>
    <source>
        <strain>IP32953</strain>
    </source>
</reference>
<dbReference type="EC" id="4.3.2.1" evidence="1"/>
<dbReference type="EMBL" id="BX936398">
    <property type="protein sequence ID" value="CAH19352.1"/>
    <property type="molecule type" value="Genomic_DNA"/>
</dbReference>
<dbReference type="RefSeq" id="WP_011191469.1">
    <property type="nucleotide sequence ID" value="NC_006155.1"/>
</dbReference>
<dbReference type="SMR" id="Q66G70"/>
<dbReference type="GeneID" id="49787917"/>
<dbReference type="KEGG" id="ypo:BZ17_2484"/>
<dbReference type="KEGG" id="yps:YPTB0112"/>
<dbReference type="PATRIC" id="fig|273123.14.peg.2603"/>
<dbReference type="UniPathway" id="UPA00068">
    <property type="reaction ID" value="UER00114"/>
</dbReference>
<dbReference type="Proteomes" id="UP000001011">
    <property type="component" value="Chromosome"/>
</dbReference>
<dbReference type="GO" id="GO:0005829">
    <property type="term" value="C:cytosol"/>
    <property type="evidence" value="ECO:0007669"/>
    <property type="project" value="TreeGrafter"/>
</dbReference>
<dbReference type="GO" id="GO:0004056">
    <property type="term" value="F:argininosuccinate lyase activity"/>
    <property type="evidence" value="ECO:0007669"/>
    <property type="project" value="UniProtKB-UniRule"/>
</dbReference>
<dbReference type="GO" id="GO:0042450">
    <property type="term" value="P:arginine biosynthetic process via ornithine"/>
    <property type="evidence" value="ECO:0007669"/>
    <property type="project" value="InterPro"/>
</dbReference>
<dbReference type="GO" id="GO:0006526">
    <property type="term" value="P:L-arginine biosynthetic process"/>
    <property type="evidence" value="ECO:0007669"/>
    <property type="project" value="UniProtKB-UniRule"/>
</dbReference>
<dbReference type="CDD" id="cd01359">
    <property type="entry name" value="Argininosuccinate_lyase"/>
    <property type="match status" value="1"/>
</dbReference>
<dbReference type="FunFam" id="1.10.275.10:FF:000004">
    <property type="entry name" value="Argininosuccinate lyase"/>
    <property type="match status" value="1"/>
</dbReference>
<dbReference type="FunFam" id="1.10.40.30:FF:000001">
    <property type="entry name" value="Argininosuccinate lyase"/>
    <property type="match status" value="1"/>
</dbReference>
<dbReference type="FunFam" id="1.20.200.10:FF:000006">
    <property type="entry name" value="Argininosuccinate lyase"/>
    <property type="match status" value="1"/>
</dbReference>
<dbReference type="Gene3D" id="1.10.40.30">
    <property type="entry name" value="Fumarase/aspartase (C-terminal domain)"/>
    <property type="match status" value="1"/>
</dbReference>
<dbReference type="Gene3D" id="1.20.200.10">
    <property type="entry name" value="Fumarase/aspartase (Central domain)"/>
    <property type="match status" value="1"/>
</dbReference>
<dbReference type="Gene3D" id="1.10.275.10">
    <property type="entry name" value="Fumarase/aspartase (N-terminal domain)"/>
    <property type="match status" value="1"/>
</dbReference>
<dbReference type="HAMAP" id="MF_00006">
    <property type="entry name" value="Arg_succ_lyase"/>
    <property type="match status" value="1"/>
</dbReference>
<dbReference type="InterPro" id="IPR029419">
    <property type="entry name" value="Arg_succ_lyase_C"/>
</dbReference>
<dbReference type="InterPro" id="IPR009049">
    <property type="entry name" value="Argininosuccinate_lyase"/>
</dbReference>
<dbReference type="InterPro" id="IPR024083">
    <property type="entry name" value="Fumarase/histidase_N"/>
</dbReference>
<dbReference type="InterPro" id="IPR020557">
    <property type="entry name" value="Fumarate_lyase_CS"/>
</dbReference>
<dbReference type="InterPro" id="IPR000362">
    <property type="entry name" value="Fumarate_lyase_fam"/>
</dbReference>
<dbReference type="InterPro" id="IPR022761">
    <property type="entry name" value="Fumarate_lyase_N"/>
</dbReference>
<dbReference type="InterPro" id="IPR008948">
    <property type="entry name" value="L-Aspartase-like"/>
</dbReference>
<dbReference type="NCBIfam" id="TIGR00838">
    <property type="entry name" value="argH"/>
    <property type="match status" value="1"/>
</dbReference>
<dbReference type="NCBIfam" id="NF008964">
    <property type="entry name" value="PRK12308.1"/>
    <property type="match status" value="1"/>
</dbReference>
<dbReference type="PANTHER" id="PTHR43814">
    <property type="entry name" value="ARGININOSUCCINATE LYASE"/>
    <property type="match status" value="1"/>
</dbReference>
<dbReference type="PANTHER" id="PTHR43814:SF1">
    <property type="entry name" value="ARGININOSUCCINATE LYASE"/>
    <property type="match status" value="1"/>
</dbReference>
<dbReference type="Pfam" id="PF14698">
    <property type="entry name" value="ASL_C2"/>
    <property type="match status" value="1"/>
</dbReference>
<dbReference type="Pfam" id="PF00206">
    <property type="entry name" value="Lyase_1"/>
    <property type="match status" value="1"/>
</dbReference>
<dbReference type="PRINTS" id="PR00145">
    <property type="entry name" value="ARGSUCLYASE"/>
</dbReference>
<dbReference type="PRINTS" id="PR00149">
    <property type="entry name" value="FUMRATELYASE"/>
</dbReference>
<dbReference type="SUPFAM" id="SSF48557">
    <property type="entry name" value="L-aspartase-like"/>
    <property type="match status" value="1"/>
</dbReference>
<dbReference type="PROSITE" id="PS00163">
    <property type="entry name" value="FUMARATE_LYASES"/>
    <property type="match status" value="1"/>
</dbReference>
<accession>Q66G70</accession>
<name>ARLY_YERPS</name>
<sequence>MALWGGRFSQAADQRFKQFNDSLRFDYRLAEQDIIGSVAWSKALVTVGVLNADEQQQLEQALSVLLEEVQANPHAILASDAEDIHSWVETKLIDKVGDLGKKLHTGRSRNDQVATDLKLWCKFQITELQTAVQQLQQALVMTAEANQDAVMPGYTHLQRAQPVTFAHWCLAYVEMLSRDESRLQDTLKRLDVSPLGCGALAGTAYAIDREQLAGWLGFASATRNSLDSVSDRDHVLELLSDASIGMVHLSRFAEDLIFFNSGEAAFVDLSDRVTSGSSLMPQKKNPDALELIRGKCGRVQGALTGMTMTLKGLPLAYNKDMQEDKEGLFDALNTWLDCLHMAALVLDGIQVKRPRCKEAAEQGYANATELADYLVAKGVPFREAHHIVGEAVVEAIRQGKALEALALSDLQQFSSVIGDDVYPILALQSCLDKRVAKGGVSPQQVASAIAEAKARLF</sequence>
<proteinExistence type="inferred from homology"/>
<comment type="catalytic activity">
    <reaction evidence="1">
        <text>2-(N(omega)-L-arginino)succinate = fumarate + L-arginine</text>
        <dbReference type="Rhea" id="RHEA:24020"/>
        <dbReference type="ChEBI" id="CHEBI:29806"/>
        <dbReference type="ChEBI" id="CHEBI:32682"/>
        <dbReference type="ChEBI" id="CHEBI:57472"/>
        <dbReference type="EC" id="4.3.2.1"/>
    </reaction>
</comment>
<comment type="pathway">
    <text evidence="1">Amino-acid biosynthesis; L-arginine biosynthesis; L-arginine from L-ornithine and carbamoyl phosphate: step 3/3.</text>
</comment>
<comment type="subcellular location">
    <subcellularLocation>
        <location evidence="1">Cytoplasm</location>
    </subcellularLocation>
</comment>
<comment type="similarity">
    <text evidence="1">Belongs to the lyase 1 family. Argininosuccinate lyase subfamily.</text>
</comment>
<feature type="chain" id="PRO_0000137856" description="Argininosuccinate lyase">
    <location>
        <begin position="1"/>
        <end position="457"/>
    </location>
</feature>
<gene>
    <name evidence="1" type="primary">argH</name>
    <name type="ordered locus">YPTB0112</name>
</gene>